<protein>
    <recommendedName>
        <fullName evidence="1">Large ribosomal subunit protein uL15</fullName>
    </recommendedName>
    <alternativeName>
        <fullName evidence="3">50S ribosomal protein L15</fullName>
    </alternativeName>
</protein>
<keyword id="KW-1185">Reference proteome</keyword>
<keyword id="KW-0687">Ribonucleoprotein</keyword>
<keyword id="KW-0689">Ribosomal protein</keyword>
<keyword id="KW-0694">RNA-binding</keyword>
<keyword id="KW-0699">rRNA-binding</keyword>
<dbReference type="EMBL" id="AE017263">
    <property type="protein sequence ID" value="AAT75497.1"/>
    <property type="molecule type" value="Genomic_DNA"/>
</dbReference>
<dbReference type="RefSeq" id="WP_011183038.1">
    <property type="nucleotide sequence ID" value="NC_006055.1"/>
</dbReference>
<dbReference type="RefSeq" id="YP_053381.1">
    <property type="nucleotide sequence ID" value="NC_006055.1"/>
</dbReference>
<dbReference type="SMR" id="Q6F1X6"/>
<dbReference type="STRING" id="265311.Mfl141"/>
<dbReference type="PaxDb" id="265311-Mfl141"/>
<dbReference type="EnsemblBacteria" id="AAT75497">
    <property type="protein sequence ID" value="AAT75497"/>
    <property type="gene ID" value="Mfl141"/>
</dbReference>
<dbReference type="GeneID" id="2898047"/>
<dbReference type="KEGG" id="mfl:Mfl141"/>
<dbReference type="PATRIC" id="fig|265311.5.peg.142"/>
<dbReference type="eggNOG" id="COG0200">
    <property type="taxonomic scope" value="Bacteria"/>
</dbReference>
<dbReference type="HOGENOM" id="CLU_055188_4_2_14"/>
<dbReference type="OrthoDB" id="9810293at2"/>
<dbReference type="Proteomes" id="UP000006647">
    <property type="component" value="Chromosome"/>
</dbReference>
<dbReference type="GO" id="GO:0015934">
    <property type="term" value="C:large ribosomal subunit"/>
    <property type="evidence" value="ECO:0007669"/>
    <property type="project" value="InterPro"/>
</dbReference>
<dbReference type="GO" id="GO:0019843">
    <property type="term" value="F:rRNA binding"/>
    <property type="evidence" value="ECO:0007669"/>
    <property type="project" value="UniProtKB-UniRule"/>
</dbReference>
<dbReference type="GO" id="GO:0003735">
    <property type="term" value="F:structural constituent of ribosome"/>
    <property type="evidence" value="ECO:0007669"/>
    <property type="project" value="InterPro"/>
</dbReference>
<dbReference type="GO" id="GO:0006412">
    <property type="term" value="P:translation"/>
    <property type="evidence" value="ECO:0007669"/>
    <property type="project" value="UniProtKB-UniRule"/>
</dbReference>
<dbReference type="Gene3D" id="3.100.10.10">
    <property type="match status" value="1"/>
</dbReference>
<dbReference type="HAMAP" id="MF_01341">
    <property type="entry name" value="Ribosomal_uL15"/>
    <property type="match status" value="1"/>
</dbReference>
<dbReference type="InterPro" id="IPR030878">
    <property type="entry name" value="Ribosomal_uL15"/>
</dbReference>
<dbReference type="InterPro" id="IPR021131">
    <property type="entry name" value="Ribosomal_uL15/eL18"/>
</dbReference>
<dbReference type="InterPro" id="IPR036227">
    <property type="entry name" value="Ribosomal_uL15/eL18_sf"/>
</dbReference>
<dbReference type="InterPro" id="IPR005749">
    <property type="entry name" value="Ribosomal_uL15_bac-type"/>
</dbReference>
<dbReference type="InterPro" id="IPR001196">
    <property type="entry name" value="Ribosomal_uL15_CS"/>
</dbReference>
<dbReference type="NCBIfam" id="TIGR01071">
    <property type="entry name" value="rplO_bact"/>
    <property type="match status" value="1"/>
</dbReference>
<dbReference type="PANTHER" id="PTHR12934">
    <property type="entry name" value="50S RIBOSOMAL PROTEIN L15"/>
    <property type="match status" value="1"/>
</dbReference>
<dbReference type="PANTHER" id="PTHR12934:SF11">
    <property type="entry name" value="LARGE RIBOSOMAL SUBUNIT PROTEIN UL15M"/>
    <property type="match status" value="1"/>
</dbReference>
<dbReference type="Pfam" id="PF00828">
    <property type="entry name" value="Ribosomal_L27A"/>
    <property type="match status" value="1"/>
</dbReference>
<dbReference type="SUPFAM" id="SSF52080">
    <property type="entry name" value="Ribosomal proteins L15p and L18e"/>
    <property type="match status" value="1"/>
</dbReference>
<dbReference type="PROSITE" id="PS00475">
    <property type="entry name" value="RIBOSOMAL_L15"/>
    <property type="match status" value="1"/>
</dbReference>
<feature type="chain" id="PRO_0000104749" description="Large ribosomal subunit protein uL15">
    <location>
        <begin position="1"/>
        <end position="145"/>
    </location>
</feature>
<feature type="region of interest" description="Disordered" evidence="2">
    <location>
        <begin position="1"/>
        <end position="51"/>
    </location>
</feature>
<feature type="compositionally biased region" description="Basic and acidic residues" evidence="2">
    <location>
        <begin position="1"/>
        <end position="18"/>
    </location>
</feature>
<feature type="compositionally biased region" description="Gly residues" evidence="2">
    <location>
        <begin position="42"/>
        <end position="51"/>
    </location>
</feature>
<accession>Q6F1X6</accession>
<gene>
    <name evidence="1" type="primary">rplO</name>
    <name type="ordered locus">Mfl141</name>
</gene>
<reference key="1">
    <citation type="submission" date="2004-06" db="EMBL/GenBank/DDBJ databases">
        <authorList>
            <person name="Birren B.W."/>
            <person name="Stange-Thomann N."/>
            <person name="Hafez N."/>
            <person name="DeCaprio D."/>
            <person name="Fisher S."/>
            <person name="Butler J."/>
            <person name="Elkins T."/>
            <person name="Kodira C.D."/>
            <person name="Major J."/>
            <person name="Wang S."/>
            <person name="Nicol R."/>
            <person name="Nusbaum C."/>
        </authorList>
    </citation>
    <scope>NUCLEOTIDE SEQUENCE [LARGE SCALE GENOMIC DNA]</scope>
    <source>
        <strain>ATCC 33453 / NBRC 100688 / NCTC 11704 / L1</strain>
    </source>
</reference>
<sequence>MKLHELKYTEGSKKDVTRVGRGMASGKGKTSTRGHKGQNSRSGGGVRVGFEGGQTPLYRRLPKIGFTSPNQKEYVILNLSDLERLNLALIDHKVLVEQKIIKNEKQLVKVLGKGSITSAINVKLNKVSKSAQAEIEKLGGKVEVI</sequence>
<comment type="function">
    <text evidence="1">Binds to the 23S rRNA.</text>
</comment>
<comment type="subunit">
    <text evidence="1">Part of the 50S ribosomal subunit.</text>
</comment>
<comment type="similarity">
    <text evidence="1">Belongs to the universal ribosomal protein uL15 family.</text>
</comment>
<evidence type="ECO:0000255" key="1">
    <source>
        <dbReference type="HAMAP-Rule" id="MF_01341"/>
    </source>
</evidence>
<evidence type="ECO:0000256" key="2">
    <source>
        <dbReference type="SAM" id="MobiDB-lite"/>
    </source>
</evidence>
<evidence type="ECO:0000305" key="3"/>
<proteinExistence type="inferred from homology"/>
<name>RL15_MESFL</name>
<organism>
    <name type="scientific">Mesoplasma florum (strain ATCC 33453 / NBRC 100688 / NCTC 11704 / L1)</name>
    <name type="common">Acholeplasma florum</name>
    <dbReference type="NCBI Taxonomy" id="265311"/>
    <lineage>
        <taxon>Bacteria</taxon>
        <taxon>Bacillati</taxon>
        <taxon>Mycoplasmatota</taxon>
        <taxon>Mollicutes</taxon>
        <taxon>Entomoplasmatales</taxon>
        <taxon>Entomoplasmataceae</taxon>
        <taxon>Mesoplasma</taxon>
    </lineage>
</organism>